<dbReference type="EC" id="2.1.1.174" evidence="1"/>
<dbReference type="EMBL" id="CP000822">
    <property type="protein sequence ID" value="ABV15543.1"/>
    <property type="molecule type" value="Genomic_DNA"/>
</dbReference>
<dbReference type="RefSeq" id="WP_012135225.1">
    <property type="nucleotide sequence ID" value="NC_009792.1"/>
</dbReference>
<dbReference type="SMR" id="A8APY0"/>
<dbReference type="STRING" id="290338.CKO_04488"/>
<dbReference type="GeneID" id="45138046"/>
<dbReference type="KEGG" id="cko:CKO_04488"/>
<dbReference type="HOGENOM" id="CLU_040288_4_0_6"/>
<dbReference type="OrthoDB" id="29650at2"/>
<dbReference type="Proteomes" id="UP000008148">
    <property type="component" value="Chromosome"/>
</dbReference>
<dbReference type="GO" id="GO:0005737">
    <property type="term" value="C:cytoplasm"/>
    <property type="evidence" value="ECO:0007669"/>
    <property type="project" value="UniProtKB-SubCell"/>
</dbReference>
<dbReference type="GO" id="GO:0052916">
    <property type="term" value="F:23S rRNA (guanine(1835)-N(2))-methyltransferase activity"/>
    <property type="evidence" value="ECO:0007669"/>
    <property type="project" value="UniProtKB-EC"/>
</dbReference>
<dbReference type="GO" id="GO:0003676">
    <property type="term" value="F:nucleic acid binding"/>
    <property type="evidence" value="ECO:0007669"/>
    <property type="project" value="InterPro"/>
</dbReference>
<dbReference type="CDD" id="cd02440">
    <property type="entry name" value="AdoMet_MTases"/>
    <property type="match status" value="1"/>
</dbReference>
<dbReference type="FunFam" id="3.40.50.150:FF:000046">
    <property type="entry name" value="Ribosomal RNA large subunit methyltransferase G"/>
    <property type="match status" value="1"/>
</dbReference>
<dbReference type="Gene3D" id="3.40.50.150">
    <property type="entry name" value="Vaccinia Virus protein VP39"/>
    <property type="match status" value="2"/>
</dbReference>
<dbReference type="HAMAP" id="MF_01859">
    <property type="entry name" value="23SrRNA_methyltr_G"/>
    <property type="match status" value="1"/>
</dbReference>
<dbReference type="InterPro" id="IPR002052">
    <property type="entry name" value="DNA_methylase_N6_adenine_CS"/>
</dbReference>
<dbReference type="InterPro" id="IPR017237">
    <property type="entry name" value="rRNA_m2G-MeTrfase_RlmG"/>
</dbReference>
<dbReference type="InterPro" id="IPR046977">
    <property type="entry name" value="RsmC/RlmG"/>
</dbReference>
<dbReference type="InterPro" id="IPR029063">
    <property type="entry name" value="SAM-dependent_MTases_sf"/>
</dbReference>
<dbReference type="InterPro" id="IPR007848">
    <property type="entry name" value="Small_mtfrase_dom"/>
</dbReference>
<dbReference type="NCBIfam" id="NF011577">
    <property type="entry name" value="PRK15001.1"/>
    <property type="match status" value="1"/>
</dbReference>
<dbReference type="PANTHER" id="PTHR47816:SF5">
    <property type="entry name" value="RIBOSOMAL RNA LARGE SUBUNIT METHYLTRANSFERASE G"/>
    <property type="match status" value="1"/>
</dbReference>
<dbReference type="PANTHER" id="PTHR47816">
    <property type="entry name" value="RIBOSOMAL RNA SMALL SUBUNIT METHYLTRANSFERASE C"/>
    <property type="match status" value="1"/>
</dbReference>
<dbReference type="Pfam" id="PF05175">
    <property type="entry name" value="MTS"/>
    <property type="match status" value="1"/>
</dbReference>
<dbReference type="PIRSF" id="PIRSF037565">
    <property type="entry name" value="RRNA_m2G_Mtase_RsmD_prd"/>
    <property type="match status" value="1"/>
</dbReference>
<dbReference type="SUPFAM" id="SSF53335">
    <property type="entry name" value="S-adenosyl-L-methionine-dependent methyltransferases"/>
    <property type="match status" value="1"/>
</dbReference>
<protein>
    <recommendedName>
        <fullName evidence="1">Ribosomal RNA large subunit methyltransferase G</fullName>
        <ecNumber evidence="1">2.1.1.174</ecNumber>
    </recommendedName>
    <alternativeName>
        <fullName evidence="1">23S rRNA m2G1835 methyltransferase</fullName>
    </alternativeName>
    <alternativeName>
        <fullName evidence="1">rRNA (guanine-N(2)-)-methyltransferase RlmG</fullName>
    </alternativeName>
</protein>
<feature type="chain" id="PRO_0000366449" description="Ribosomal RNA large subunit methyltransferase G">
    <location>
        <begin position="1"/>
        <end position="378"/>
    </location>
</feature>
<organism>
    <name type="scientific">Citrobacter koseri (strain ATCC BAA-895 / CDC 4225-83 / SGSC4696)</name>
    <dbReference type="NCBI Taxonomy" id="290338"/>
    <lineage>
        <taxon>Bacteria</taxon>
        <taxon>Pseudomonadati</taxon>
        <taxon>Pseudomonadota</taxon>
        <taxon>Gammaproteobacteria</taxon>
        <taxon>Enterobacterales</taxon>
        <taxon>Enterobacteriaceae</taxon>
        <taxon>Citrobacter</taxon>
    </lineage>
</organism>
<reference key="1">
    <citation type="submission" date="2007-08" db="EMBL/GenBank/DDBJ databases">
        <authorList>
            <consortium name="The Citrobacter koseri Genome Sequencing Project"/>
            <person name="McClelland M."/>
            <person name="Sanderson E.K."/>
            <person name="Porwollik S."/>
            <person name="Spieth J."/>
            <person name="Clifton W.S."/>
            <person name="Latreille P."/>
            <person name="Courtney L."/>
            <person name="Wang C."/>
            <person name="Pepin K."/>
            <person name="Bhonagiri V."/>
            <person name="Nash W."/>
            <person name="Johnson M."/>
            <person name="Thiruvilangam P."/>
            <person name="Wilson R."/>
        </authorList>
    </citation>
    <scope>NUCLEOTIDE SEQUENCE [LARGE SCALE GENOMIC DNA]</scope>
    <source>
        <strain>ATCC BAA-895 / CDC 4225-83 / SGSC4696</strain>
    </source>
</reference>
<name>RLMG_CITK8</name>
<accession>A8APY0</accession>
<comment type="function">
    <text evidence="1">Specifically methylates the guanine in position 1835 (m2G1835) of 23S rRNA.</text>
</comment>
<comment type="catalytic activity">
    <reaction evidence="1">
        <text>guanosine(1835) in 23S rRNA + S-adenosyl-L-methionine = N(2)-methylguanosine(1835) in 23S rRNA + S-adenosyl-L-homocysteine + H(+)</text>
        <dbReference type="Rhea" id="RHEA:42744"/>
        <dbReference type="Rhea" id="RHEA-COMP:10217"/>
        <dbReference type="Rhea" id="RHEA-COMP:10218"/>
        <dbReference type="ChEBI" id="CHEBI:15378"/>
        <dbReference type="ChEBI" id="CHEBI:57856"/>
        <dbReference type="ChEBI" id="CHEBI:59789"/>
        <dbReference type="ChEBI" id="CHEBI:74269"/>
        <dbReference type="ChEBI" id="CHEBI:74481"/>
        <dbReference type="EC" id="2.1.1.174"/>
    </reaction>
</comment>
<comment type="subcellular location">
    <subcellularLocation>
        <location evidence="1">Cytoplasm</location>
    </subcellularLocation>
</comment>
<comment type="similarity">
    <text evidence="1">Belongs to the methyltransferase superfamily. RlmG family.</text>
</comment>
<evidence type="ECO:0000255" key="1">
    <source>
        <dbReference type="HAMAP-Rule" id="MF_01859"/>
    </source>
</evidence>
<keyword id="KW-0963">Cytoplasm</keyword>
<keyword id="KW-0489">Methyltransferase</keyword>
<keyword id="KW-1185">Reference proteome</keyword>
<keyword id="KW-0698">rRNA processing</keyword>
<keyword id="KW-0949">S-adenosyl-L-methionine</keyword>
<keyword id="KW-0808">Transferase</keyword>
<gene>
    <name evidence="1" type="primary">rlmG</name>
    <name type="ordered locus">CKO_04488</name>
</gene>
<proteinExistence type="inferred from homology"/>
<sequence length="378" mass="42098">MSHVDNGFRSLTLKRFPETDDVNPLQAWEAADEYLLQQLDDTEISGPLLILNDAFGALSCALAEHTPYSIGDSYLSELATRENLRHNDIAESSVKFLDSTAAYPPAPGVVLIKVPKTLALLEQQLRALRQVVTPQTRIIAGAKARDIHTSTLELFEKVLGPTTTTLAWKKARLINCTFSKPELADAPQTLSWKLDGTDWTIHNHANVFSRTGLDIGARFFMQHLPENLEGEIVDLGCGNGVIGLTLLAKNPQASVVFVDESPMAVASSRLNVETNMPEALDRCEFMINNALSGVEPFRFNAVLCNPPFHQKHALTDNVAWEMFHHARRCLKINGELYIVANRHLDYFHKLKKIFGNCTTIATNNKFVVLKAVKTGRRR</sequence>